<organism>
    <name type="scientific">Homo sapiens</name>
    <name type="common">Human</name>
    <dbReference type="NCBI Taxonomy" id="9606"/>
    <lineage>
        <taxon>Eukaryota</taxon>
        <taxon>Metazoa</taxon>
        <taxon>Chordata</taxon>
        <taxon>Craniata</taxon>
        <taxon>Vertebrata</taxon>
        <taxon>Euteleostomi</taxon>
        <taxon>Mammalia</taxon>
        <taxon>Eutheria</taxon>
        <taxon>Euarchontoglires</taxon>
        <taxon>Primates</taxon>
        <taxon>Haplorrhini</taxon>
        <taxon>Catarrhini</taxon>
        <taxon>Hominidae</taxon>
        <taxon>Homo</taxon>
    </lineage>
</organism>
<keyword id="KW-0002">3D-structure</keyword>
<keyword id="KW-0007">Acetylation</keyword>
<keyword id="KW-0903">Direct protein sequencing</keyword>
<keyword id="KW-1015">Disulfide bond</keyword>
<keyword id="KW-0256">Endoplasmic reticulum</keyword>
<keyword id="KW-0945">Host-virus interaction</keyword>
<keyword id="KW-0413">Isomerase</keyword>
<keyword id="KW-1267">Proteomics identification</keyword>
<keyword id="KW-0676">Redox-active center</keyword>
<keyword id="KW-1185">Reference proteome</keyword>
<keyword id="KW-0677">Repeat</keyword>
<keyword id="KW-0732">Signal</keyword>
<gene>
    <name type="primary">PDIA4</name>
    <name type="synonym">ERP70</name>
    <name type="synonym">ERP72</name>
</gene>
<sequence>MRPRKAFLLLLLLGLVQLLAVAGAEGPDEDSSNRENAIEDEEEEEEEDDDEEEDDLEVKEENGVLVLNDANFDNFVADKDTVLLEFYAPWCGHCKQFAPEYEKIANILKDKDPPIPVAKIDATSASVLASRFDVSGYPTIKILKKGQAVDYEGSRTQEEIVAKVREVSQPDWTPPPEVTLVLTKENFDEVVNDADIILVEFYAPWCGHCKKLAPEYEKAAKELSKRSPPIPLAKVDATAETDLAKRFDVSGYPTLKIFRKGRPYDYNGPREKYGIVDYMIEQSGPPSKEILTLKQVQEFLKDGDDVIIIGVFKGESDPAYQQYQDAANNLREDYKFHHTFSTEIAKFLKVSQGQLVVMQPEKFQSKYEPRSHMMDVQGSTQDSAIKDFVLKYALPLVGHRKVSNDAKRYTRRPLVVVYYSVDFSFDYRAATQFWRSKVLEVAKDFPEYTFAIADEEDYAGEVKDLGLSESGEDVNAAILDESGKKFAMEPEEFDSDTLREFVTAFKKGKLKPVIKSQPVPKNNKGPVKVVVGKTFDSIVMDPKKDVLIEFYAPWCGHCKQLEPVYNSLAKKYKGQKGLVIAKMDATANDVPSDRYKVEGFPTIYFAPSGDKKNPVKFEGGDRDLEHLSKFIEEHATKLSRTKEEL</sequence>
<reference key="1">
    <citation type="journal article" date="1989" name="J. Biol. Chem.">
        <title>Human deoxycytidine kinase. Sequence of cDNA clones and analysis of expression in cell lines with and without enzyme activity.</title>
        <authorList>
            <person name="Huang S.-H."/>
            <person name="Tomich J.M."/>
            <person name="Wu H."/>
            <person name="Jong A."/>
            <person name="Holcenberg J.S."/>
        </authorList>
    </citation>
    <scope>NUCLEOTIDE SEQUENCE [MRNA]</scope>
    <scope>PARTIAL PROTEIN SEQUENCE</scope>
</reference>
<reference key="2">
    <citation type="journal article" date="1991" name="J. Biol. Chem.">
        <authorList>
            <person name="Huang S.-H."/>
            <person name="Tomich J.M."/>
            <person name="Wu H."/>
            <person name="Jong A."/>
            <person name="Holcenberg J.S."/>
        </authorList>
    </citation>
    <scope>ERRATUM OF PUBMED:2549034</scope>
    <scope>SEQUENCE REVISION</scope>
</reference>
<reference key="3">
    <citation type="journal article" date="2004" name="Nat. Genet.">
        <title>Complete sequencing and characterization of 21,243 full-length human cDNAs.</title>
        <authorList>
            <person name="Ota T."/>
            <person name="Suzuki Y."/>
            <person name="Nishikawa T."/>
            <person name="Otsuki T."/>
            <person name="Sugiyama T."/>
            <person name="Irie R."/>
            <person name="Wakamatsu A."/>
            <person name="Hayashi K."/>
            <person name="Sato H."/>
            <person name="Nagai K."/>
            <person name="Kimura K."/>
            <person name="Makita H."/>
            <person name="Sekine M."/>
            <person name="Obayashi M."/>
            <person name="Nishi T."/>
            <person name="Shibahara T."/>
            <person name="Tanaka T."/>
            <person name="Ishii S."/>
            <person name="Yamamoto J."/>
            <person name="Saito K."/>
            <person name="Kawai Y."/>
            <person name="Isono Y."/>
            <person name="Nakamura Y."/>
            <person name="Nagahari K."/>
            <person name="Murakami K."/>
            <person name="Yasuda T."/>
            <person name="Iwayanagi T."/>
            <person name="Wagatsuma M."/>
            <person name="Shiratori A."/>
            <person name="Sudo H."/>
            <person name="Hosoiri T."/>
            <person name="Kaku Y."/>
            <person name="Kodaira H."/>
            <person name="Kondo H."/>
            <person name="Sugawara M."/>
            <person name="Takahashi M."/>
            <person name="Kanda K."/>
            <person name="Yokoi T."/>
            <person name="Furuya T."/>
            <person name="Kikkawa E."/>
            <person name="Omura Y."/>
            <person name="Abe K."/>
            <person name="Kamihara K."/>
            <person name="Katsuta N."/>
            <person name="Sato K."/>
            <person name="Tanikawa M."/>
            <person name="Yamazaki M."/>
            <person name="Ninomiya K."/>
            <person name="Ishibashi T."/>
            <person name="Yamashita H."/>
            <person name="Murakawa K."/>
            <person name="Fujimori K."/>
            <person name="Tanai H."/>
            <person name="Kimata M."/>
            <person name="Watanabe M."/>
            <person name="Hiraoka S."/>
            <person name="Chiba Y."/>
            <person name="Ishida S."/>
            <person name="Ono Y."/>
            <person name="Takiguchi S."/>
            <person name="Watanabe S."/>
            <person name="Yosida M."/>
            <person name="Hotuta T."/>
            <person name="Kusano J."/>
            <person name="Kanehori K."/>
            <person name="Takahashi-Fujii A."/>
            <person name="Hara H."/>
            <person name="Tanase T.-O."/>
            <person name="Nomura Y."/>
            <person name="Togiya S."/>
            <person name="Komai F."/>
            <person name="Hara R."/>
            <person name="Takeuchi K."/>
            <person name="Arita M."/>
            <person name="Imose N."/>
            <person name="Musashino K."/>
            <person name="Yuuki H."/>
            <person name="Oshima A."/>
            <person name="Sasaki N."/>
            <person name="Aotsuka S."/>
            <person name="Yoshikawa Y."/>
            <person name="Matsunawa H."/>
            <person name="Ichihara T."/>
            <person name="Shiohata N."/>
            <person name="Sano S."/>
            <person name="Moriya S."/>
            <person name="Momiyama H."/>
            <person name="Satoh N."/>
            <person name="Takami S."/>
            <person name="Terashima Y."/>
            <person name="Suzuki O."/>
            <person name="Nakagawa S."/>
            <person name="Senoh A."/>
            <person name="Mizoguchi H."/>
            <person name="Goto Y."/>
            <person name="Shimizu F."/>
            <person name="Wakebe H."/>
            <person name="Hishigaki H."/>
            <person name="Watanabe T."/>
            <person name="Sugiyama A."/>
            <person name="Takemoto M."/>
            <person name="Kawakami B."/>
            <person name="Yamazaki M."/>
            <person name="Watanabe K."/>
            <person name="Kumagai A."/>
            <person name="Itakura S."/>
            <person name="Fukuzumi Y."/>
            <person name="Fujimori Y."/>
            <person name="Komiyama M."/>
            <person name="Tashiro H."/>
            <person name="Tanigami A."/>
            <person name="Fujiwara T."/>
            <person name="Ono T."/>
            <person name="Yamada K."/>
            <person name="Fujii Y."/>
            <person name="Ozaki K."/>
            <person name="Hirao M."/>
            <person name="Ohmori Y."/>
            <person name="Kawabata A."/>
            <person name="Hikiji T."/>
            <person name="Kobatake N."/>
            <person name="Inagaki H."/>
            <person name="Ikema Y."/>
            <person name="Okamoto S."/>
            <person name="Okitani R."/>
            <person name="Kawakami T."/>
            <person name="Noguchi S."/>
            <person name="Itoh T."/>
            <person name="Shigeta K."/>
            <person name="Senba T."/>
            <person name="Matsumura K."/>
            <person name="Nakajima Y."/>
            <person name="Mizuno T."/>
            <person name="Morinaga M."/>
            <person name="Sasaki M."/>
            <person name="Togashi T."/>
            <person name="Oyama M."/>
            <person name="Hata H."/>
            <person name="Watanabe M."/>
            <person name="Komatsu T."/>
            <person name="Mizushima-Sugano J."/>
            <person name="Satoh T."/>
            <person name="Shirai Y."/>
            <person name="Takahashi Y."/>
            <person name="Nakagawa K."/>
            <person name="Okumura K."/>
            <person name="Nagase T."/>
            <person name="Nomura N."/>
            <person name="Kikuchi H."/>
            <person name="Masuho Y."/>
            <person name="Yamashita R."/>
            <person name="Nakai K."/>
            <person name="Yada T."/>
            <person name="Nakamura Y."/>
            <person name="Ohara O."/>
            <person name="Isogai T."/>
            <person name="Sugano S."/>
        </authorList>
    </citation>
    <scope>NUCLEOTIDE SEQUENCE [LARGE SCALE MRNA]</scope>
</reference>
<reference key="4">
    <citation type="journal article" date="2003" name="Nature">
        <title>The DNA sequence of human chromosome 7.</title>
        <authorList>
            <person name="Hillier L.W."/>
            <person name="Fulton R.S."/>
            <person name="Fulton L.A."/>
            <person name="Graves T.A."/>
            <person name="Pepin K.H."/>
            <person name="Wagner-McPherson C."/>
            <person name="Layman D."/>
            <person name="Maas J."/>
            <person name="Jaeger S."/>
            <person name="Walker R."/>
            <person name="Wylie K."/>
            <person name="Sekhon M."/>
            <person name="Becker M.C."/>
            <person name="O'Laughlin M.D."/>
            <person name="Schaller M.E."/>
            <person name="Fewell G.A."/>
            <person name="Delehaunty K.D."/>
            <person name="Miner T.L."/>
            <person name="Nash W.E."/>
            <person name="Cordes M."/>
            <person name="Du H."/>
            <person name="Sun H."/>
            <person name="Edwards J."/>
            <person name="Bradshaw-Cordum H."/>
            <person name="Ali J."/>
            <person name="Andrews S."/>
            <person name="Isak A."/>
            <person name="Vanbrunt A."/>
            <person name="Nguyen C."/>
            <person name="Du F."/>
            <person name="Lamar B."/>
            <person name="Courtney L."/>
            <person name="Kalicki J."/>
            <person name="Ozersky P."/>
            <person name="Bielicki L."/>
            <person name="Scott K."/>
            <person name="Holmes A."/>
            <person name="Harkins R."/>
            <person name="Harris A."/>
            <person name="Strong C.M."/>
            <person name="Hou S."/>
            <person name="Tomlinson C."/>
            <person name="Dauphin-Kohlberg S."/>
            <person name="Kozlowicz-Reilly A."/>
            <person name="Leonard S."/>
            <person name="Rohlfing T."/>
            <person name="Rock S.M."/>
            <person name="Tin-Wollam A.-M."/>
            <person name="Abbott A."/>
            <person name="Minx P."/>
            <person name="Maupin R."/>
            <person name="Strowmatt C."/>
            <person name="Latreille P."/>
            <person name="Miller N."/>
            <person name="Johnson D."/>
            <person name="Murray J."/>
            <person name="Woessner J.P."/>
            <person name="Wendl M.C."/>
            <person name="Yang S.-P."/>
            <person name="Schultz B.R."/>
            <person name="Wallis J.W."/>
            <person name="Spieth J."/>
            <person name="Bieri T.A."/>
            <person name="Nelson J.O."/>
            <person name="Berkowicz N."/>
            <person name="Wohldmann P.E."/>
            <person name="Cook L.L."/>
            <person name="Hickenbotham M.T."/>
            <person name="Eldred J."/>
            <person name="Williams D."/>
            <person name="Bedell J.A."/>
            <person name="Mardis E.R."/>
            <person name="Clifton S.W."/>
            <person name="Chissoe S.L."/>
            <person name="Marra M.A."/>
            <person name="Raymond C."/>
            <person name="Haugen E."/>
            <person name="Gillett W."/>
            <person name="Zhou Y."/>
            <person name="James R."/>
            <person name="Phelps K."/>
            <person name="Iadanoto S."/>
            <person name="Bubb K."/>
            <person name="Simms E."/>
            <person name="Levy R."/>
            <person name="Clendenning J."/>
            <person name="Kaul R."/>
            <person name="Kent W.J."/>
            <person name="Furey T.S."/>
            <person name="Baertsch R.A."/>
            <person name="Brent M.R."/>
            <person name="Keibler E."/>
            <person name="Flicek P."/>
            <person name="Bork P."/>
            <person name="Suyama M."/>
            <person name="Bailey J.A."/>
            <person name="Portnoy M.E."/>
            <person name="Torrents D."/>
            <person name="Chinwalla A.T."/>
            <person name="Gish W.R."/>
            <person name="Eddy S.R."/>
            <person name="McPherson J.D."/>
            <person name="Olson M.V."/>
            <person name="Eichler E.E."/>
            <person name="Green E.D."/>
            <person name="Waterston R.H."/>
            <person name="Wilson R.K."/>
        </authorList>
    </citation>
    <scope>NUCLEOTIDE SEQUENCE [LARGE SCALE GENOMIC DNA]</scope>
</reference>
<reference key="5">
    <citation type="submission" date="2005-09" db="EMBL/GenBank/DDBJ databases">
        <authorList>
            <person name="Mural R.J."/>
            <person name="Istrail S."/>
            <person name="Sutton G.G."/>
            <person name="Florea L."/>
            <person name="Halpern A.L."/>
            <person name="Mobarry C.M."/>
            <person name="Lippert R."/>
            <person name="Walenz B."/>
            <person name="Shatkay H."/>
            <person name="Dew I."/>
            <person name="Miller J.R."/>
            <person name="Flanigan M.J."/>
            <person name="Edwards N.J."/>
            <person name="Bolanos R."/>
            <person name="Fasulo D."/>
            <person name="Halldorsson B.V."/>
            <person name="Hannenhalli S."/>
            <person name="Turner R."/>
            <person name="Yooseph S."/>
            <person name="Lu F."/>
            <person name="Nusskern D.R."/>
            <person name="Shue B.C."/>
            <person name="Zheng X.H."/>
            <person name="Zhong F."/>
            <person name="Delcher A.L."/>
            <person name="Huson D.H."/>
            <person name="Kravitz S.A."/>
            <person name="Mouchard L."/>
            <person name="Reinert K."/>
            <person name="Remington K.A."/>
            <person name="Clark A.G."/>
            <person name="Waterman M.S."/>
            <person name="Eichler E.E."/>
            <person name="Adams M.D."/>
            <person name="Hunkapiller M.W."/>
            <person name="Myers E.W."/>
            <person name="Venter J.C."/>
        </authorList>
    </citation>
    <scope>NUCLEOTIDE SEQUENCE [LARGE SCALE GENOMIC DNA]</scope>
</reference>
<reference key="6">
    <citation type="journal article" date="2004" name="Genome Res.">
        <title>The status, quality, and expansion of the NIH full-length cDNA project: the Mammalian Gene Collection (MGC).</title>
        <authorList>
            <consortium name="The MGC Project Team"/>
        </authorList>
    </citation>
    <scope>NUCLEOTIDE SEQUENCE [LARGE SCALE MRNA]</scope>
    <source>
        <tissue>Lung</tissue>
        <tissue>Muscle</tissue>
    </source>
</reference>
<reference key="7">
    <citation type="journal article" date="2002" name="Mol. Biol. Cell">
        <title>A subset of chaperones and folding enzymes form multiprotein complexes in endoplasmic reticulum to bind nascent proteins.</title>
        <authorList>
            <person name="Meunier L."/>
            <person name="Usherwood Y.-K."/>
            <person name="Chung K.T."/>
            <person name="Hendershot L.M."/>
        </authorList>
    </citation>
    <scope>COMPONENT OF A CHAPERONE COMPLEX</scope>
</reference>
<reference key="8">
    <citation type="journal article" date="2003" name="J. Proteome Res.">
        <title>Proteomic analysis of early melanosomes: identification of novel melanosomal proteins.</title>
        <authorList>
            <person name="Basrur V."/>
            <person name="Yang F."/>
            <person name="Kushimoto T."/>
            <person name="Higashimoto Y."/>
            <person name="Yasumoto K."/>
            <person name="Valencia J."/>
            <person name="Muller J."/>
            <person name="Vieira W.D."/>
            <person name="Watabe H."/>
            <person name="Shabanowitz J."/>
            <person name="Hearing V.J."/>
            <person name="Hunt D.F."/>
            <person name="Appella E."/>
        </authorList>
    </citation>
    <scope>SUBCELLULAR LOCATION [LARGE SCALE ANALYSIS]</scope>
    <source>
        <tissue>Melanoma</tissue>
    </source>
</reference>
<reference key="9">
    <citation type="journal article" date="2006" name="J. Proteome Res.">
        <title>Proteomic and bioinformatic characterization of the biogenesis and function of melanosomes.</title>
        <authorList>
            <person name="Chi A."/>
            <person name="Valencia J.C."/>
            <person name="Hu Z.-Z."/>
            <person name="Watabe H."/>
            <person name="Yamaguchi H."/>
            <person name="Mangini N.J."/>
            <person name="Huang H."/>
            <person name="Canfield V.A."/>
            <person name="Cheng K.C."/>
            <person name="Yang F."/>
            <person name="Abe R."/>
            <person name="Yamagishi S."/>
            <person name="Shabanowitz J."/>
            <person name="Hearing V.J."/>
            <person name="Wu C."/>
            <person name="Appella E."/>
            <person name="Hunt D.F."/>
        </authorList>
    </citation>
    <scope>SUBCELLULAR LOCATION [LARGE SCALE ANALYSIS]</scope>
    <source>
        <tissue>Melanoma</tissue>
    </source>
</reference>
<reference key="10">
    <citation type="journal article" date="2020" name="Viruses">
        <title>Protein Disulfide Isomerase A4 Is Involved in Genome Uncoating during Human Astrovirus Cell Entry.</title>
        <authorList>
            <person name="Aguilar-Hernandez N."/>
            <person name="Meyer L."/>
            <person name="Lopez S."/>
            <person name="DuBois R.M."/>
            <person name="Arias C.F."/>
        </authorList>
    </citation>
    <scope>INTERACTION WITH HUMAN ASTROVIRUS-1 AND HUMAN ASTROVIRUS-1 SPIKE PROTEIN VP25 (MICROBIAL INFECTION)</scope>
</reference>
<reference key="11">
    <citation type="journal article" date="2009" name="Science">
        <title>Lysine acetylation targets protein complexes and co-regulates major cellular functions.</title>
        <authorList>
            <person name="Choudhary C."/>
            <person name="Kumar C."/>
            <person name="Gnad F."/>
            <person name="Nielsen M.L."/>
            <person name="Rehman M."/>
            <person name="Walther T.C."/>
            <person name="Olsen J.V."/>
            <person name="Mann M."/>
        </authorList>
    </citation>
    <scope>ACETYLATION [LARGE SCALE ANALYSIS] AT LYS-366</scope>
    <scope>IDENTIFICATION BY MASS SPECTROMETRY [LARGE SCALE ANALYSIS]</scope>
</reference>
<reference key="12">
    <citation type="journal article" date="2011" name="BMC Syst. Biol.">
        <title>Initial characterization of the human central proteome.</title>
        <authorList>
            <person name="Burkard T.R."/>
            <person name="Planyavsky M."/>
            <person name="Kaupe I."/>
            <person name="Breitwieser F.P."/>
            <person name="Buerckstuemmer T."/>
            <person name="Bennett K.L."/>
            <person name="Superti-Furga G."/>
            <person name="Colinge J."/>
        </authorList>
    </citation>
    <scope>IDENTIFICATION BY MASS SPECTROMETRY [LARGE SCALE ANALYSIS]</scope>
</reference>
<reference key="13">
    <citation type="journal article" date="2014" name="J. Proteomics">
        <title>An enzyme assisted RP-RPLC approach for in-depth analysis of human liver phosphoproteome.</title>
        <authorList>
            <person name="Bian Y."/>
            <person name="Song C."/>
            <person name="Cheng K."/>
            <person name="Dong M."/>
            <person name="Wang F."/>
            <person name="Huang J."/>
            <person name="Sun D."/>
            <person name="Wang L."/>
            <person name="Ye M."/>
            <person name="Zou H."/>
        </authorList>
    </citation>
    <scope>IDENTIFICATION BY MASS SPECTROMETRY [LARGE SCALE ANALYSIS]</scope>
    <source>
        <tissue>Liver</tissue>
    </source>
</reference>
<reference key="14">
    <citation type="journal article" date="2015" name="Proteomics">
        <title>N-terminome analysis of the human mitochondrial proteome.</title>
        <authorList>
            <person name="Vaca Jacome A.S."/>
            <person name="Rabilloud T."/>
            <person name="Schaeffer-Reiss C."/>
            <person name="Rompais M."/>
            <person name="Ayoub D."/>
            <person name="Lane L."/>
            <person name="Bairoch A."/>
            <person name="Van Dorsselaer A."/>
            <person name="Carapito C."/>
        </authorList>
    </citation>
    <scope>IDENTIFICATION BY MASS SPECTROMETRY [LARGE SCALE ANALYSIS]</scope>
</reference>
<reference key="15">
    <citation type="journal article" date="2010" name="J. Mol. Biol.">
        <title>Structure of the catalytic a(0)a fragment of the protein disulfide isomerase ERp72.</title>
        <authorList>
            <person name="Kozlov G."/>
            <person name="Azeroual S."/>
            <person name="Rosenauer A."/>
            <person name="Maeaettaenen P."/>
            <person name="Denisov A.Y."/>
            <person name="Thomas D.Y."/>
            <person name="Gehring K."/>
        </authorList>
    </citation>
    <scope>X-RAY CRYSTALLOGRAPHY (1.95 ANGSTROMS) OF 53-284</scope>
</reference>
<protein>
    <recommendedName>
        <fullName>Protein disulfide-isomerase A4</fullName>
        <ecNumber evidence="1">5.3.4.1</ecNumber>
    </recommendedName>
    <alternativeName>
        <fullName>Endoplasmic reticulum resident protein 70</fullName>
        <shortName>ER protein 70</shortName>
        <shortName>ERp70</shortName>
    </alternativeName>
    <alternativeName>
        <fullName>Endoplasmic reticulum resident protein 72</fullName>
        <shortName>ER protein 72</shortName>
        <shortName>ERp-72</shortName>
        <shortName>ERp72</shortName>
    </alternativeName>
</protein>
<name>PDIA4_HUMAN</name>
<comment type="catalytic activity">
    <reaction evidence="1">
        <text>Catalyzes the rearrangement of -S-S- bonds in proteins.</text>
        <dbReference type="EC" id="5.3.4.1"/>
    </reaction>
</comment>
<comment type="subunit">
    <text evidence="1">Part of a large chaperone multiprotein complex comprising DNAJB11, HSP90B1, HSPA5, HYOU, PDIA2, PDIA4, PDIA6, PPIB, SDF2L1, UGGT1 and very small amounts of ERP29, but not, or at very low levels, CALR nor CANX. Component of a complex containing at least CRELD2, MANF, MATN3 and PDIA4 (By similarity).</text>
</comment>
<comment type="subunit">
    <text evidence="7">(Microbial infection) Interacts with Human astrovirus-1 and Human astrovirus-8 spike protein VP25; this interaction seems to facilitate the uncoating during virus entry into the cell (PubMed:33396308). Does not interact with Human astrovirus-2 spike protein VP25 (PubMed:33396308).</text>
</comment>
<comment type="interaction">
    <interactant intactId="EBI-1054653">
        <id>P13667</id>
    </interactant>
    <interactant intactId="EBI-6309137">
        <id>Q9NPA0</id>
        <label>EMC7</label>
    </interactant>
    <organismsDiffer>false</organismsDiffer>
    <experiments>2</experiments>
</comment>
<comment type="interaction">
    <interactant intactId="EBI-1054653">
        <id>P13667</id>
    </interactant>
    <interactant intactId="EBI-10171774">
        <id>P60410</id>
        <label>KRTAP10-8</label>
    </interactant>
    <organismsDiffer>false</organismsDiffer>
    <experiments>3</experiments>
</comment>
<comment type="interaction">
    <interactant intactId="EBI-1054653">
        <id>P13667</id>
    </interactant>
    <interactant intactId="EBI-10210845">
        <id>P59990</id>
        <label>KRTAP12-1</label>
    </interactant>
    <organismsDiffer>false</organismsDiffer>
    <experiments>3</experiments>
</comment>
<comment type="interaction">
    <interactant intactId="EBI-1054653">
        <id>P13667</id>
    </interactant>
    <interactant intactId="EBI-10302392">
        <id>Q9BYQ6</id>
        <label>KRTAP4-11</label>
    </interactant>
    <organismsDiffer>false</organismsDiffer>
    <experiments>3</experiments>
</comment>
<comment type="interaction">
    <interactant intactId="EBI-1054653">
        <id>P13667</id>
    </interactant>
    <interactant intactId="EBI-11911016">
        <id>P80188</id>
        <label>LCN2</label>
    </interactant>
    <organismsDiffer>false</organismsDiffer>
    <experiments>3</experiments>
</comment>
<comment type="interaction">
    <interactant intactId="EBI-1054653">
        <id>P13667</id>
    </interactant>
    <interactant intactId="EBI-6262458">
        <id>O15232</id>
        <label>MATN3</label>
    </interactant>
    <organismsDiffer>false</organismsDiffer>
    <experiments>6</experiments>
</comment>
<comment type="interaction">
    <interactant intactId="EBI-1054653">
        <id>P13667</id>
    </interactant>
    <interactant intactId="EBI-359252">
        <id>P23284</id>
        <label>PPIB</label>
    </interactant>
    <organismsDiffer>false</organismsDiffer>
    <experiments>2</experiments>
</comment>
<comment type="interaction">
    <interactant intactId="EBI-1054653">
        <id>P13667</id>
    </interactant>
    <interactant intactId="EBI-8771982">
        <id>PRO_0000025479</id>
        <label>PPIB</label>
        <dbReference type="UniProtKB" id="P23284"/>
    </interactant>
    <organismsDiffer>false</organismsDiffer>
    <experiments>3</experiments>
</comment>
<comment type="interaction">
    <interactant intactId="EBI-1054653">
        <id>P13667</id>
    </interactant>
    <interactant intactId="EBI-6248077">
        <id>Q76353</id>
    </interactant>
    <organismsDiffer>true</organismsDiffer>
    <experiments>3</experiments>
</comment>
<comment type="subcellular location">
    <subcellularLocation>
        <location evidence="5">Endoplasmic reticulum lumen</location>
    </subcellularLocation>
    <subcellularLocation>
        <location evidence="6">Melanosome</location>
    </subcellularLocation>
    <text evidence="6">Identified by mass spectrometry in melanosome fractions from stage I to stage IV (PubMed:17081065).</text>
</comment>
<comment type="similarity">
    <text evidence="8">Belongs to the protein disulfide isomerase family.</text>
</comment>
<comment type="caution">
    <text evidence="9">Was originally thought to be a deoxycytidine kinase.</text>
</comment>
<proteinExistence type="evidence at protein level"/>
<dbReference type="EC" id="5.3.4.1" evidence="1"/>
<dbReference type="EMBL" id="J05016">
    <property type="protein sequence ID" value="AAA58460.1"/>
    <property type="molecule type" value="mRNA"/>
</dbReference>
<dbReference type="EMBL" id="AK290971">
    <property type="protein sequence ID" value="BAF83660.1"/>
    <property type="molecule type" value="mRNA"/>
</dbReference>
<dbReference type="EMBL" id="AC093743">
    <property type="protein sequence ID" value="AAQ96863.1"/>
    <property type="molecule type" value="Genomic_DNA"/>
</dbReference>
<dbReference type="EMBL" id="CH471146">
    <property type="protein sequence ID" value="EAW80065.1"/>
    <property type="molecule type" value="Genomic_DNA"/>
</dbReference>
<dbReference type="EMBL" id="CH471146">
    <property type="protein sequence ID" value="EAW80066.1"/>
    <property type="molecule type" value="Genomic_DNA"/>
</dbReference>
<dbReference type="EMBL" id="BC000425">
    <property type="protein sequence ID" value="AAH00425.1"/>
    <property type="molecule type" value="mRNA"/>
</dbReference>
<dbReference type="EMBL" id="BC001928">
    <property type="protein sequence ID" value="AAH01928.1"/>
    <property type="molecule type" value="mRNA"/>
</dbReference>
<dbReference type="EMBL" id="BC006344">
    <property type="protein sequence ID" value="AAH06344.1"/>
    <property type="molecule type" value="mRNA"/>
</dbReference>
<dbReference type="EMBL" id="BC011754">
    <property type="protein sequence ID" value="AAH11754.1"/>
    <property type="molecule type" value="mRNA"/>
</dbReference>
<dbReference type="CCDS" id="CCDS5893.1"/>
<dbReference type="PIR" id="A23723">
    <property type="entry name" value="A23723"/>
</dbReference>
<dbReference type="RefSeq" id="NP_004902.1">
    <property type="nucleotide sequence ID" value="NM_004911.5"/>
</dbReference>
<dbReference type="PDB" id="3IDV">
    <property type="method" value="X-ray"/>
    <property type="resolution" value="1.95 A"/>
    <property type="chains" value="A=53-284"/>
</dbReference>
<dbReference type="PDBsum" id="3IDV"/>
<dbReference type="SMR" id="P13667"/>
<dbReference type="BioGRID" id="114966">
    <property type="interactions" value="506"/>
</dbReference>
<dbReference type="FunCoup" id="P13667">
    <property type="interactions" value="326"/>
</dbReference>
<dbReference type="IntAct" id="P13667">
    <property type="interactions" value="155"/>
</dbReference>
<dbReference type="MINT" id="P13667"/>
<dbReference type="STRING" id="9606.ENSP00000499129"/>
<dbReference type="BindingDB" id="P13667"/>
<dbReference type="ChEMBL" id="CHEMBL4295717"/>
<dbReference type="GlyGen" id="P13667">
    <property type="glycosylation" value="5 sites, 1 O-linked glycan (5 sites)"/>
</dbReference>
<dbReference type="iPTMnet" id="P13667"/>
<dbReference type="MetOSite" id="P13667"/>
<dbReference type="PhosphoSitePlus" id="P13667"/>
<dbReference type="SwissPalm" id="P13667"/>
<dbReference type="BioMuta" id="PDIA4"/>
<dbReference type="DMDM" id="119530"/>
<dbReference type="OGP" id="P13667"/>
<dbReference type="REPRODUCTION-2DPAGE" id="IPI00009904"/>
<dbReference type="CPTAC" id="CPTAC-105"/>
<dbReference type="CPTAC" id="CPTAC-106"/>
<dbReference type="jPOST" id="P13667"/>
<dbReference type="MassIVE" id="P13667"/>
<dbReference type="PaxDb" id="9606-ENSP00000286091"/>
<dbReference type="PeptideAtlas" id="P13667"/>
<dbReference type="ProteomicsDB" id="52955"/>
<dbReference type="Pumba" id="P13667"/>
<dbReference type="Antibodypedia" id="3377">
    <property type="antibodies" value="512 antibodies from 33 providers"/>
</dbReference>
<dbReference type="DNASU" id="9601"/>
<dbReference type="Ensembl" id="ENST00000652332.1">
    <property type="protein sequence ID" value="ENSP00000499129.1"/>
    <property type="gene ID" value="ENSG00000155660.11"/>
</dbReference>
<dbReference type="GeneID" id="9601"/>
<dbReference type="KEGG" id="hsa:9601"/>
<dbReference type="MANE-Select" id="ENST00000652332.1">
    <property type="protein sequence ID" value="ENSP00000499129.1"/>
    <property type="RefSeq nucleotide sequence ID" value="NM_004911.5"/>
    <property type="RefSeq protein sequence ID" value="NP_004902.1"/>
</dbReference>
<dbReference type="UCSC" id="uc003wff.3">
    <property type="organism name" value="human"/>
</dbReference>
<dbReference type="AGR" id="HGNC:30167"/>
<dbReference type="CTD" id="9601"/>
<dbReference type="DisGeNET" id="9601"/>
<dbReference type="GeneCards" id="PDIA4"/>
<dbReference type="HGNC" id="HGNC:30167">
    <property type="gene designation" value="PDIA4"/>
</dbReference>
<dbReference type="HPA" id="ENSG00000155660">
    <property type="expression patterns" value="Low tissue specificity"/>
</dbReference>
<dbReference type="MIM" id="620018">
    <property type="type" value="gene"/>
</dbReference>
<dbReference type="neXtProt" id="NX_P13667"/>
<dbReference type="OpenTargets" id="ENSG00000155660"/>
<dbReference type="PharmGKB" id="PA142671190"/>
<dbReference type="VEuPathDB" id="HostDB:ENSG00000155660"/>
<dbReference type="eggNOG" id="KOG0190">
    <property type="taxonomic scope" value="Eukaryota"/>
</dbReference>
<dbReference type="GeneTree" id="ENSGT00940000157738"/>
<dbReference type="HOGENOM" id="CLU_025879_6_2_1"/>
<dbReference type="InParanoid" id="P13667"/>
<dbReference type="OMA" id="FRSKHEP"/>
<dbReference type="OrthoDB" id="427280at2759"/>
<dbReference type="PAN-GO" id="P13667">
    <property type="GO annotations" value="5 GO annotations based on evolutionary models"/>
</dbReference>
<dbReference type="PhylomeDB" id="P13667"/>
<dbReference type="TreeFam" id="TF106382"/>
<dbReference type="BRENDA" id="5.3.4.1">
    <property type="organism ID" value="2681"/>
</dbReference>
<dbReference type="PathwayCommons" id="P13667"/>
<dbReference type="SignaLink" id="P13667"/>
<dbReference type="BioGRID-ORCS" id="9601">
    <property type="hits" value="10 hits in 1153 CRISPR screens"/>
</dbReference>
<dbReference type="ChiTaRS" id="PDIA4">
    <property type="organism name" value="human"/>
</dbReference>
<dbReference type="EvolutionaryTrace" id="P13667"/>
<dbReference type="GenomeRNAi" id="9601"/>
<dbReference type="Pharos" id="P13667">
    <property type="development level" value="Tbio"/>
</dbReference>
<dbReference type="PRO" id="PR:P13667"/>
<dbReference type="Proteomes" id="UP000005640">
    <property type="component" value="Chromosome 7"/>
</dbReference>
<dbReference type="RNAct" id="P13667">
    <property type="molecule type" value="protein"/>
</dbReference>
<dbReference type="Bgee" id="ENSG00000155660">
    <property type="expression patterns" value="Expressed in pylorus and 205 other cell types or tissues"/>
</dbReference>
<dbReference type="ExpressionAtlas" id="P13667">
    <property type="expression patterns" value="baseline and differential"/>
</dbReference>
<dbReference type="GO" id="GO:0009986">
    <property type="term" value="C:cell surface"/>
    <property type="evidence" value="ECO:0000314"/>
    <property type="project" value="MGI"/>
</dbReference>
<dbReference type="GO" id="GO:0005783">
    <property type="term" value="C:endoplasmic reticulum"/>
    <property type="evidence" value="ECO:0000318"/>
    <property type="project" value="GO_Central"/>
</dbReference>
<dbReference type="GO" id="GO:0005788">
    <property type="term" value="C:endoplasmic reticulum lumen"/>
    <property type="evidence" value="ECO:0000304"/>
    <property type="project" value="ProtInc"/>
</dbReference>
<dbReference type="GO" id="GO:0005615">
    <property type="term" value="C:extracellular space"/>
    <property type="evidence" value="ECO:0000314"/>
    <property type="project" value="UniProtKB"/>
</dbReference>
<dbReference type="GO" id="GO:0042470">
    <property type="term" value="C:melanosome"/>
    <property type="evidence" value="ECO:0007669"/>
    <property type="project" value="UniProtKB-SubCell"/>
</dbReference>
<dbReference type="GO" id="GO:0003756">
    <property type="term" value="F:protein disulfide isomerase activity"/>
    <property type="evidence" value="ECO:0000250"/>
    <property type="project" value="UniProtKB"/>
</dbReference>
<dbReference type="GO" id="GO:0015035">
    <property type="term" value="F:protein-disulfide reductase activity"/>
    <property type="evidence" value="ECO:0000314"/>
    <property type="project" value="UniProtKB"/>
</dbReference>
<dbReference type="GO" id="GO:0003723">
    <property type="term" value="F:RNA binding"/>
    <property type="evidence" value="ECO:0007005"/>
    <property type="project" value="UniProtKB"/>
</dbReference>
<dbReference type="GO" id="GO:0061077">
    <property type="term" value="P:chaperone-mediated protein folding"/>
    <property type="evidence" value="ECO:0000250"/>
    <property type="project" value="UniProtKB"/>
</dbReference>
<dbReference type="GO" id="GO:0006457">
    <property type="term" value="P:protein folding"/>
    <property type="evidence" value="ECO:0000318"/>
    <property type="project" value="GO_Central"/>
</dbReference>
<dbReference type="GO" id="GO:0009306">
    <property type="term" value="P:protein secretion"/>
    <property type="evidence" value="ECO:0000304"/>
    <property type="project" value="ProtInc"/>
</dbReference>
<dbReference type="GO" id="GO:0034976">
    <property type="term" value="P:response to endoplasmic reticulum stress"/>
    <property type="evidence" value="ECO:0000318"/>
    <property type="project" value="GO_Central"/>
</dbReference>
<dbReference type="CDD" id="cd02961">
    <property type="entry name" value="PDI_a_family"/>
    <property type="match status" value="2"/>
</dbReference>
<dbReference type="CDD" id="cd02995">
    <property type="entry name" value="PDI_a_PDI_a'_C"/>
    <property type="match status" value="1"/>
</dbReference>
<dbReference type="CDD" id="cd03073">
    <property type="entry name" value="PDI_b'_ERp72_ERp57"/>
    <property type="match status" value="1"/>
</dbReference>
<dbReference type="CDD" id="cd03068">
    <property type="entry name" value="PDI_b_ERp72"/>
    <property type="match status" value="1"/>
</dbReference>
<dbReference type="FunFam" id="3.40.30.10:FF:000017">
    <property type="entry name" value="Protein disulfide-isomerase A4"/>
    <property type="match status" value="1"/>
</dbReference>
<dbReference type="FunFam" id="3.40.30.10:FF:000067">
    <property type="entry name" value="Protein disulfide-isomerase A4"/>
    <property type="match status" value="1"/>
</dbReference>
<dbReference type="FunFam" id="3.40.30.10:FF:000076">
    <property type="entry name" value="Protein disulfide-isomerase A4"/>
    <property type="match status" value="1"/>
</dbReference>
<dbReference type="FunFam" id="3.40.30.10:FF:000084">
    <property type="entry name" value="Protein disulfide-isomerase A4"/>
    <property type="match status" value="1"/>
</dbReference>
<dbReference type="FunFam" id="3.40.30.10:FF:000126">
    <property type="entry name" value="Protein disulfide-isomerase A4"/>
    <property type="match status" value="1"/>
</dbReference>
<dbReference type="Gene3D" id="3.40.30.10">
    <property type="entry name" value="Glutaredoxin"/>
    <property type="match status" value="5"/>
</dbReference>
<dbReference type="InterPro" id="IPR005788">
    <property type="entry name" value="PDI_thioredoxin-like_dom"/>
</dbReference>
<dbReference type="InterPro" id="IPR041866">
    <property type="entry name" value="PDIA4_PDI_b"/>
</dbReference>
<dbReference type="InterPro" id="IPR005792">
    <property type="entry name" value="Prot_disulphide_isomerase"/>
</dbReference>
<dbReference type="InterPro" id="IPR017068">
    <property type="entry name" value="Protein_diS-isomerase_A4"/>
</dbReference>
<dbReference type="InterPro" id="IPR036249">
    <property type="entry name" value="Thioredoxin-like_sf"/>
</dbReference>
<dbReference type="InterPro" id="IPR017937">
    <property type="entry name" value="Thioredoxin_CS"/>
</dbReference>
<dbReference type="InterPro" id="IPR013766">
    <property type="entry name" value="Thioredoxin_domain"/>
</dbReference>
<dbReference type="NCBIfam" id="TIGR01130">
    <property type="entry name" value="ER_PDI_fam"/>
    <property type="match status" value="1"/>
</dbReference>
<dbReference type="NCBIfam" id="TIGR01126">
    <property type="entry name" value="pdi_dom"/>
    <property type="match status" value="3"/>
</dbReference>
<dbReference type="PANTHER" id="PTHR18929">
    <property type="entry name" value="PROTEIN DISULFIDE ISOMERASE"/>
    <property type="match status" value="1"/>
</dbReference>
<dbReference type="PANTHER" id="PTHR18929:SF210">
    <property type="entry name" value="PROTEIN DISULFIDE-ISOMERASE A4"/>
    <property type="match status" value="1"/>
</dbReference>
<dbReference type="Pfam" id="PF00085">
    <property type="entry name" value="Thioredoxin"/>
    <property type="match status" value="3"/>
</dbReference>
<dbReference type="Pfam" id="PF13848">
    <property type="entry name" value="Thioredoxin_6"/>
    <property type="match status" value="1"/>
</dbReference>
<dbReference type="PIRSF" id="PIRSF036862">
    <property type="entry name" value="Disulphide_isom_A4"/>
    <property type="match status" value="1"/>
</dbReference>
<dbReference type="PRINTS" id="PR00421">
    <property type="entry name" value="THIOREDOXIN"/>
</dbReference>
<dbReference type="SUPFAM" id="SSF52833">
    <property type="entry name" value="Thioredoxin-like"/>
    <property type="match status" value="5"/>
</dbReference>
<dbReference type="PROSITE" id="PS00014">
    <property type="entry name" value="ER_TARGET"/>
    <property type="match status" value="1"/>
</dbReference>
<dbReference type="PROSITE" id="PS00194">
    <property type="entry name" value="THIOREDOXIN_1"/>
    <property type="match status" value="3"/>
</dbReference>
<dbReference type="PROSITE" id="PS51352">
    <property type="entry name" value="THIOREDOXIN_2"/>
    <property type="match status" value="3"/>
</dbReference>
<feature type="signal peptide" evidence="2">
    <location>
        <begin position="1"/>
        <end position="20"/>
    </location>
</feature>
<feature type="chain" id="PRO_0000034229" description="Protein disulfide-isomerase A4">
    <location>
        <begin position="21"/>
        <end position="645"/>
    </location>
</feature>
<feature type="domain" description="Thioredoxin 1" evidence="3">
    <location>
        <begin position="21"/>
        <end position="169"/>
    </location>
</feature>
<feature type="domain" description="Thioredoxin 2" evidence="3">
    <location>
        <begin position="158"/>
        <end position="301"/>
    </location>
</feature>
<feature type="domain" description="Thioredoxin 3" evidence="3">
    <location>
        <begin position="505"/>
        <end position="636"/>
    </location>
</feature>
<feature type="region of interest" description="Disordered" evidence="4">
    <location>
        <begin position="24"/>
        <end position="58"/>
    </location>
</feature>
<feature type="short sequence motif" description="CXXC" evidence="1">
    <location>
        <begin position="91"/>
        <end position="94"/>
    </location>
</feature>
<feature type="short sequence motif" description="CXXC" evidence="1">
    <location>
        <begin position="555"/>
        <end position="558"/>
    </location>
</feature>
<feature type="short sequence motif" description="Prevents secretion from ER">
    <location>
        <begin position="642"/>
        <end position="645"/>
    </location>
</feature>
<feature type="compositionally biased region" description="Acidic residues" evidence="4">
    <location>
        <begin position="38"/>
        <end position="58"/>
    </location>
</feature>
<feature type="modified residue" description="N6-acetyllysine" evidence="10">
    <location>
        <position position="366"/>
    </location>
</feature>
<feature type="disulfide bond" description="Redox-active" evidence="1 3">
    <location>
        <begin position="91"/>
        <end position="94"/>
    </location>
</feature>
<feature type="disulfide bond" description="Redox-active" evidence="3">
    <location>
        <begin position="206"/>
        <end position="209"/>
    </location>
</feature>
<feature type="disulfide bond" description="Redox-active" evidence="1 3">
    <location>
        <begin position="555"/>
        <end position="558"/>
    </location>
</feature>
<feature type="sequence variant" id="VAR_052580" description="In dbSNP:rs2290971.">
    <original>T</original>
    <variation>M</variation>
    <location>
        <position position="173"/>
    </location>
</feature>
<feature type="sequence conflict" description="In Ref. 3; BAF83660." evidence="8" ref="3">
    <original>E</original>
    <variation>G</variation>
    <location>
        <position position="102"/>
    </location>
</feature>
<feature type="strand" evidence="11">
    <location>
        <begin position="59"/>
        <end position="61"/>
    </location>
</feature>
<feature type="strand" evidence="11">
    <location>
        <begin position="64"/>
        <end position="66"/>
    </location>
</feature>
<feature type="turn" evidence="11">
    <location>
        <begin position="69"/>
        <end position="71"/>
    </location>
</feature>
<feature type="helix" evidence="11">
    <location>
        <begin position="72"/>
        <end position="76"/>
    </location>
</feature>
<feature type="strand" evidence="11">
    <location>
        <begin position="80"/>
        <end position="87"/>
    </location>
</feature>
<feature type="helix" evidence="11">
    <location>
        <begin position="92"/>
        <end position="109"/>
    </location>
</feature>
<feature type="strand" evidence="11">
    <location>
        <begin position="111"/>
        <end position="113"/>
    </location>
</feature>
<feature type="strand" evidence="11">
    <location>
        <begin position="117"/>
        <end position="121"/>
    </location>
</feature>
<feature type="turn" evidence="11">
    <location>
        <begin position="122"/>
        <end position="124"/>
    </location>
</feature>
<feature type="helix" evidence="11">
    <location>
        <begin position="126"/>
        <end position="131"/>
    </location>
</feature>
<feature type="strand" evidence="11">
    <location>
        <begin position="136"/>
        <end position="144"/>
    </location>
</feature>
<feature type="strand" evidence="11">
    <location>
        <begin position="147"/>
        <end position="150"/>
    </location>
</feature>
<feature type="helix" evidence="11">
    <location>
        <begin position="157"/>
        <end position="168"/>
    </location>
</feature>
<feature type="strand" evidence="11">
    <location>
        <begin position="178"/>
        <end position="181"/>
    </location>
</feature>
<feature type="turn" evidence="11">
    <location>
        <begin position="184"/>
        <end position="186"/>
    </location>
</feature>
<feature type="helix" evidence="11">
    <location>
        <begin position="187"/>
        <end position="193"/>
    </location>
</feature>
<feature type="strand" evidence="11">
    <location>
        <begin position="195"/>
        <end position="202"/>
    </location>
</feature>
<feature type="helix" evidence="11">
    <location>
        <begin position="208"/>
        <end position="211"/>
    </location>
</feature>
<feature type="helix" evidence="11">
    <location>
        <begin position="213"/>
        <end position="224"/>
    </location>
</feature>
<feature type="strand" evidence="11">
    <location>
        <begin position="226"/>
        <end position="228"/>
    </location>
</feature>
<feature type="strand" evidence="11">
    <location>
        <begin position="232"/>
        <end position="236"/>
    </location>
</feature>
<feature type="turn" evidence="11">
    <location>
        <begin position="237"/>
        <end position="239"/>
    </location>
</feature>
<feature type="helix" evidence="11">
    <location>
        <begin position="241"/>
        <end position="246"/>
    </location>
</feature>
<feature type="strand" evidence="11">
    <location>
        <begin position="251"/>
        <end position="259"/>
    </location>
</feature>
<feature type="strand" evidence="11">
    <location>
        <begin position="262"/>
        <end position="265"/>
    </location>
</feature>
<feature type="helix" evidence="11">
    <location>
        <begin position="272"/>
        <end position="282"/>
    </location>
</feature>
<evidence type="ECO:0000250" key="1">
    <source>
        <dbReference type="UniProtKB" id="P08003"/>
    </source>
</evidence>
<evidence type="ECO:0000255" key="2"/>
<evidence type="ECO:0000255" key="3">
    <source>
        <dbReference type="PROSITE-ProRule" id="PRU00691"/>
    </source>
</evidence>
<evidence type="ECO:0000256" key="4">
    <source>
        <dbReference type="SAM" id="MobiDB-lite"/>
    </source>
</evidence>
<evidence type="ECO:0000269" key="5">
    <source>
    </source>
</evidence>
<evidence type="ECO:0000269" key="6">
    <source>
    </source>
</evidence>
<evidence type="ECO:0000269" key="7">
    <source>
    </source>
</evidence>
<evidence type="ECO:0000305" key="8"/>
<evidence type="ECO:0000305" key="9">
    <source>
    </source>
</evidence>
<evidence type="ECO:0007744" key="10">
    <source>
    </source>
</evidence>
<evidence type="ECO:0007829" key="11">
    <source>
        <dbReference type="PDB" id="3IDV"/>
    </source>
</evidence>
<accession>P13667</accession>
<accession>A8K4K6</accession>
<accession>Q549T6</accession>